<dbReference type="EC" id="2.4.1.109"/>
<dbReference type="EMBL" id="CH379063">
    <property type="protein sequence ID" value="EAL32641.1"/>
    <property type="status" value="ALT_SEQ"/>
    <property type="molecule type" value="Genomic_DNA"/>
</dbReference>
<dbReference type="RefSeq" id="XP_001355582.1">
    <property type="nucleotide sequence ID" value="XM_001355546.3"/>
</dbReference>
<dbReference type="SMR" id="Q29IL2"/>
<dbReference type="FunCoup" id="Q29IL2">
    <property type="interactions" value="518"/>
</dbReference>
<dbReference type="STRING" id="46245.Q29IL2"/>
<dbReference type="GlyCosmos" id="Q29IL2">
    <property type="glycosylation" value="7 sites, No reported glycans"/>
</dbReference>
<dbReference type="EnsemblMetazoa" id="FBtr0275095">
    <property type="protein sequence ID" value="FBpp0273533"/>
    <property type="gene ID" value="FBgn0071599"/>
</dbReference>
<dbReference type="GeneID" id="4815847"/>
<dbReference type="KEGG" id="dpo:4815847"/>
<dbReference type="CTD" id="8168"/>
<dbReference type="eggNOG" id="KOG3359">
    <property type="taxonomic scope" value="Eukaryota"/>
</dbReference>
<dbReference type="HOGENOM" id="CLU_008438_5_0_1"/>
<dbReference type="InParanoid" id="Q29IL2"/>
<dbReference type="OMA" id="MCGWDDN"/>
<dbReference type="PhylomeDB" id="Q29IL2"/>
<dbReference type="UniPathway" id="UPA00378"/>
<dbReference type="ChiTaRS" id="tws">
    <property type="organism name" value="fly"/>
</dbReference>
<dbReference type="Proteomes" id="UP000001819">
    <property type="component" value="Chromosome X"/>
</dbReference>
<dbReference type="Bgee" id="FBgn0071599">
    <property type="expression patterns" value="Expressed in adult organism"/>
</dbReference>
<dbReference type="GO" id="GO:0005783">
    <property type="term" value="C:endoplasmic reticulum"/>
    <property type="evidence" value="ECO:0000250"/>
    <property type="project" value="UniProtKB"/>
</dbReference>
<dbReference type="GO" id="GO:0005789">
    <property type="term" value="C:endoplasmic reticulum membrane"/>
    <property type="evidence" value="ECO:0007669"/>
    <property type="project" value="UniProtKB-SubCell"/>
</dbReference>
<dbReference type="GO" id="GO:0004169">
    <property type="term" value="F:dolichyl-phosphate-mannose-protein mannosyltransferase activity"/>
    <property type="evidence" value="ECO:0007669"/>
    <property type="project" value="UniProtKB-EC"/>
</dbReference>
<dbReference type="GO" id="GO:0007517">
    <property type="term" value="P:muscle organ development"/>
    <property type="evidence" value="ECO:0000250"/>
    <property type="project" value="UniProtKB"/>
</dbReference>
<dbReference type="CDD" id="cd23282">
    <property type="entry name" value="beta-trefoil_MIR_POMT2"/>
    <property type="match status" value="1"/>
</dbReference>
<dbReference type="FunFam" id="2.80.10.50:FF:000026">
    <property type="entry name" value="Blast:Protein O-mannosyl-transferase 2"/>
    <property type="match status" value="1"/>
</dbReference>
<dbReference type="Gene3D" id="2.80.10.50">
    <property type="match status" value="1"/>
</dbReference>
<dbReference type="InterPro" id="IPR027005">
    <property type="entry name" value="GlyclTrfase_39-like"/>
</dbReference>
<dbReference type="InterPro" id="IPR003342">
    <property type="entry name" value="Glyco_trans_39/83"/>
</dbReference>
<dbReference type="InterPro" id="IPR036300">
    <property type="entry name" value="MIR_dom_sf"/>
</dbReference>
<dbReference type="InterPro" id="IPR016093">
    <property type="entry name" value="MIR_motif"/>
</dbReference>
<dbReference type="InterPro" id="IPR032421">
    <property type="entry name" value="PMT_4TMC"/>
</dbReference>
<dbReference type="PANTHER" id="PTHR10050">
    <property type="entry name" value="DOLICHYL-PHOSPHATE-MANNOSE--PROTEIN MANNOSYLTRANSFERASE"/>
    <property type="match status" value="1"/>
</dbReference>
<dbReference type="PANTHER" id="PTHR10050:SF46">
    <property type="entry name" value="PROTEIN O-MANNOSYL-TRANSFERASE 2"/>
    <property type="match status" value="1"/>
</dbReference>
<dbReference type="Pfam" id="PF02815">
    <property type="entry name" value="MIR"/>
    <property type="match status" value="1"/>
</dbReference>
<dbReference type="Pfam" id="PF02366">
    <property type="entry name" value="PMT"/>
    <property type="match status" value="1"/>
</dbReference>
<dbReference type="Pfam" id="PF16192">
    <property type="entry name" value="PMT_4TMC"/>
    <property type="match status" value="1"/>
</dbReference>
<dbReference type="SMART" id="SM00472">
    <property type="entry name" value="MIR"/>
    <property type="match status" value="3"/>
</dbReference>
<dbReference type="SUPFAM" id="SSF82109">
    <property type="entry name" value="MIR domain"/>
    <property type="match status" value="1"/>
</dbReference>
<dbReference type="PROSITE" id="PS50919">
    <property type="entry name" value="MIR"/>
    <property type="match status" value="3"/>
</dbReference>
<protein>
    <recommendedName>
        <fullName>Protein O-mannosyl-transferase 2</fullName>
        <ecNumber>2.4.1.109</ecNumber>
    </recommendedName>
    <alternativeName>
        <fullName>Dolichyl-phosphate-mannose--protein mannosyltransferase 2</fullName>
    </alternativeName>
    <alternativeName>
        <fullName>Protein twisted</fullName>
    </alternativeName>
</protein>
<proteinExistence type="inferred from homology"/>
<organism>
    <name type="scientific">Drosophila pseudoobscura pseudoobscura</name>
    <name type="common">Fruit fly</name>
    <dbReference type="NCBI Taxonomy" id="46245"/>
    <lineage>
        <taxon>Eukaryota</taxon>
        <taxon>Metazoa</taxon>
        <taxon>Ecdysozoa</taxon>
        <taxon>Arthropoda</taxon>
        <taxon>Hexapoda</taxon>
        <taxon>Insecta</taxon>
        <taxon>Pterygota</taxon>
        <taxon>Neoptera</taxon>
        <taxon>Endopterygota</taxon>
        <taxon>Diptera</taxon>
        <taxon>Brachycera</taxon>
        <taxon>Muscomorpha</taxon>
        <taxon>Ephydroidea</taxon>
        <taxon>Drosophilidae</taxon>
        <taxon>Drosophila</taxon>
        <taxon>Sophophora</taxon>
    </lineage>
</organism>
<sequence length="749" mass="84957">MAASVVKTPKCPRRGSAKEQQSKASPKSNNESNNWHWWILLASVFLITFATRFYKVTEPDHICWDETHFGKMGSWYINRTFFFDVHPPLGKMLIGLSGYLTGYNGTFPFEKPGDKYNETAYQGMRYFCTTLGALIMPMGFDTVYDLTRSHEAALLSAAYLIFDVGLLTLNQYILLDPILLFFMMGSVWGMVKISKATASGGSYSVRWWFWLFLTGTMLSCTISVKFVGLFVVLLVGLHTATELWLILGDLGQPIVETLKQIACRAIALILWPILLYTLFFYIHLSVLNRSGNGDGFYSSAFQSRLIGNSLYNASMPRDVAYGSVVTIKNHKTGGGYLHSHFHLYPKGSGARQQQITTYTHKDDNNKWVIKPHNKQRLPKDKLQLLRHGDLVRLEHLVTKRNLHSHSEPAPMTKKHLQVTGYGESGVGDANDVWRVLIVGGKVNETVHTVTSRLMLIHYLQNCALTSSGKQLPKWGFEQQEVSCNLNVRDKYAHWNVEDNEHKLLPSVSFSVYAPGFFARFLESHAVMLQGNAGLKPKEGEVTSRPWQWPINYRGQFFSGSSYRIYLLGNPVIWWSNLVFLALFVAVFLGNAILEQRRAGQARALVRSQADSEDSEPSTTDVPLCTCCPEEQQLLSRPREEHRDPLGAAAWLFVGWLLHYLPFWAMGRVLYFHHYFPALIFNSLLTGVMFHHIIQSLPRWIQHVLLGGLLSLIVYSFALFSPLAYGMSGPLANEPNSTMHSLKWLSTWEF</sequence>
<gene>
    <name evidence="2" type="primary">tw</name>
    <name type="ORF">GA11548</name>
</gene>
<comment type="function">
    <text evidence="1">Rt/POMT1 and tw/POMT2 function as a protein O-mannosyltransferase in association with each other to generate and maintain normal muscle development.</text>
</comment>
<comment type="catalytic activity">
    <reaction evidence="6">
        <text>a di-trans,poly-cis-dolichyl beta-D-mannosyl phosphate + L-seryl-[protein] = 3-O-(alpha-D-mannosyl)-L-seryl-[protein] + a di-trans,poly-cis-dolichyl phosphate + H(+)</text>
        <dbReference type="Rhea" id="RHEA:17377"/>
        <dbReference type="Rhea" id="RHEA-COMP:9863"/>
        <dbReference type="Rhea" id="RHEA-COMP:13546"/>
        <dbReference type="Rhea" id="RHEA-COMP:19498"/>
        <dbReference type="Rhea" id="RHEA-COMP:19501"/>
        <dbReference type="ChEBI" id="CHEBI:15378"/>
        <dbReference type="ChEBI" id="CHEBI:29999"/>
        <dbReference type="ChEBI" id="CHEBI:57683"/>
        <dbReference type="ChEBI" id="CHEBI:58211"/>
        <dbReference type="ChEBI" id="CHEBI:137321"/>
        <dbReference type="EC" id="2.4.1.109"/>
    </reaction>
</comment>
<comment type="catalytic activity">
    <reaction evidence="6">
        <text>a di-trans,poly-cis-dolichyl beta-D-mannosyl phosphate + L-threonyl-[protein] = 3-O-(alpha-D-mannosyl)-L-threonyl-[protein] + a di-trans,poly-cis-dolichyl phosphate + H(+)</text>
        <dbReference type="Rhea" id="RHEA:53396"/>
        <dbReference type="Rhea" id="RHEA-COMP:11060"/>
        <dbReference type="Rhea" id="RHEA-COMP:13547"/>
        <dbReference type="Rhea" id="RHEA-COMP:19498"/>
        <dbReference type="Rhea" id="RHEA-COMP:19501"/>
        <dbReference type="ChEBI" id="CHEBI:15378"/>
        <dbReference type="ChEBI" id="CHEBI:30013"/>
        <dbReference type="ChEBI" id="CHEBI:57683"/>
        <dbReference type="ChEBI" id="CHEBI:58211"/>
        <dbReference type="ChEBI" id="CHEBI:137323"/>
        <dbReference type="EC" id="2.4.1.109"/>
    </reaction>
</comment>
<comment type="pathway">
    <text evidence="6">Protein modification; protein glycosylation.</text>
</comment>
<comment type="subunit">
    <text evidence="2">Interacts with Rt/POMT1.</text>
</comment>
<comment type="subcellular location">
    <subcellularLocation>
        <location evidence="2">Endoplasmic reticulum membrane</location>
        <topology evidence="2">Multi-pass membrane protein</topology>
    </subcellularLocation>
</comment>
<comment type="similarity">
    <text evidence="3">Belongs to the glycosyltransferase 39 family.</text>
</comment>
<comment type="sequence caution" evidence="6">
    <conflict type="erroneous gene model prediction">
        <sequence resource="EMBL-CDS" id="EAL32641"/>
    </conflict>
</comment>
<evidence type="ECO:0000250" key="1"/>
<evidence type="ECO:0000250" key="2">
    <source>
        <dbReference type="UniProtKB" id="Q9W5D4"/>
    </source>
</evidence>
<evidence type="ECO:0000255" key="3"/>
<evidence type="ECO:0000255" key="4">
    <source>
        <dbReference type="PROSITE-ProRule" id="PRU00131"/>
    </source>
</evidence>
<evidence type="ECO:0000256" key="5">
    <source>
        <dbReference type="SAM" id="MobiDB-lite"/>
    </source>
</evidence>
<evidence type="ECO:0000305" key="6"/>
<evidence type="ECO:0000312" key="7">
    <source>
        <dbReference type="EMBL" id="EAL32641.1"/>
    </source>
</evidence>
<feature type="chain" id="PRO_0000307927" description="Protein O-mannosyl-transferase 2">
    <location>
        <begin position="1"/>
        <end position="749"/>
    </location>
</feature>
<feature type="transmembrane region" description="Helical" evidence="3">
    <location>
        <begin position="34"/>
        <end position="54"/>
    </location>
</feature>
<feature type="transmembrane region" description="Helical" evidence="3">
    <location>
        <begin position="126"/>
        <end position="146"/>
    </location>
</feature>
<feature type="transmembrane region" description="Helical" evidence="3">
    <location>
        <begin position="173"/>
        <end position="193"/>
    </location>
</feature>
<feature type="transmembrane region" description="Helical" evidence="3">
    <location>
        <begin position="204"/>
        <end position="224"/>
    </location>
</feature>
<feature type="transmembrane region" description="Helical" evidence="3">
    <location>
        <begin position="226"/>
        <end position="246"/>
    </location>
</feature>
<feature type="transmembrane region" description="Helical" evidence="3">
    <location>
        <begin position="266"/>
        <end position="286"/>
    </location>
</feature>
<feature type="transmembrane region" description="Helical" evidence="3">
    <location>
        <begin position="572"/>
        <end position="592"/>
    </location>
</feature>
<feature type="transmembrane region" description="Helical" evidence="3">
    <location>
        <begin position="645"/>
        <end position="665"/>
    </location>
</feature>
<feature type="transmembrane region" description="Helical" evidence="3">
    <location>
        <begin position="669"/>
        <end position="689"/>
    </location>
</feature>
<feature type="transmembrane region" description="Helical" evidence="3">
    <location>
        <begin position="703"/>
        <end position="723"/>
    </location>
</feature>
<feature type="domain" description="MIR 1" evidence="4">
    <location>
        <begin position="316"/>
        <end position="372"/>
    </location>
</feature>
<feature type="domain" description="MIR 2" evidence="4">
    <location>
        <begin position="382"/>
        <end position="438"/>
    </location>
</feature>
<feature type="domain" description="MIR 3" evidence="4">
    <location>
        <begin position="443"/>
        <end position="499"/>
    </location>
</feature>
<feature type="region of interest" description="Disordered" evidence="5">
    <location>
        <begin position="1"/>
        <end position="30"/>
    </location>
</feature>
<feature type="glycosylation site" description="N-linked (GlcNAc...) asparagine" evidence="3">
    <location>
        <position position="78"/>
    </location>
</feature>
<feature type="glycosylation site" description="N-linked (GlcNAc...) asparagine" evidence="3">
    <location>
        <position position="104"/>
    </location>
</feature>
<feature type="glycosylation site" description="N-linked (GlcNAc...) asparagine" evidence="3">
    <location>
        <position position="117"/>
    </location>
</feature>
<feature type="glycosylation site" description="N-linked (GlcNAc...) asparagine" evidence="3">
    <location>
        <position position="288"/>
    </location>
</feature>
<feature type="glycosylation site" description="N-linked (GlcNAc...) asparagine" evidence="3">
    <location>
        <position position="312"/>
    </location>
</feature>
<feature type="glycosylation site" description="N-linked (GlcNAc...) asparagine" evidence="3">
    <location>
        <position position="443"/>
    </location>
</feature>
<feature type="glycosylation site" description="N-linked (GlcNAc...) asparagine" evidence="3">
    <location>
        <position position="735"/>
    </location>
</feature>
<reference evidence="7" key="1">
    <citation type="journal article" date="2005" name="Genome Res.">
        <title>Comparative genome sequencing of Drosophila pseudoobscura: chromosomal, gene, and cis-element evolution.</title>
        <authorList>
            <person name="Richards S."/>
            <person name="Liu Y."/>
            <person name="Bettencourt B.R."/>
            <person name="Hradecky P."/>
            <person name="Letovsky S."/>
            <person name="Nielsen R."/>
            <person name="Thornton K."/>
            <person name="Hubisz M.J."/>
            <person name="Chen R."/>
            <person name="Meisel R.P."/>
            <person name="Couronne O."/>
            <person name="Hua S."/>
            <person name="Smith M.A."/>
            <person name="Zhang P."/>
            <person name="Liu J."/>
            <person name="Bussemaker H.J."/>
            <person name="van Batenburg M.F."/>
            <person name="Howells S.L."/>
            <person name="Scherer S.E."/>
            <person name="Sodergren E."/>
            <person name="Matthews B.B."/>
            <person name="Crosby M.A."/>
            <person name="Schroeder A.J."/>
            <person name="Ortiz-Barrientos D."/>
            <person name="Rives C.M."/>
            <person name="Metzker M.L."/>
            <person name="Muzny D.M."/>
            <person name="Scott G."/>
            <person name="Steffen D."/>
            <person name="Wheeler D.A."/>
            <person name="Worley K.C."/>
            <person name="Havlak P."/>
            <person name="Durbin K.J."/>
            <person name="Egan A."/>
            <person name="Gill R."/>
            <person name="Hume J."/>
            <person name="Morgan M.B."/>
            <person name="Miner G."/>
            <person name="Hamilton C."/>
            <person name="Huang Y."/>
            <person name="Waldron L."/>
            <person name="Verduzco D."/>
            <person name="Clerc-Blankenburg K.P."/>
            <person name="Dubchak I."/>
            <person name="Noor M.A.F."/>
            <person name="Anderson W."/>
            <person name="White K.P."/>
            <person name="Clark A.G."/>
            <person name="Schaeffer S.W."/>
            <person name="Gelbart W.M."/>
            <person name="Weinstock G.M."/>
            <person name="Gibbs R.A."/>
        </authorList>
    </citation>
    <scope>NUCLEOTIDE SEQUENCE [LARGE SCALE GENOMIC DNA]</scope>
    <source>
        <strain>MV2-25 / Tucson 14011-0121.94</strain>
    </source>
</reference>
<name>POMT2_DROPS</name>
<keyword id="KW-0217">Developmental protein</keyword>
<keyword id="KW-0256">Endoplasmic reticulum</keyword>
<keyword id="KW-0325">Glycoprotein</keyword>
<keyword id="KW-0328">Glycosyltransferase</keyword>
<keyword id="KW-0472">Membrane</keyword>
<keyword id="KW-1185">Reference proteome</keyword>
<keyword id="KW-0677">Repeat</keyword>
<keyword id="KW-0808">Transferase</keyword>
<keyword id="KW-0812">Transmembrane</keyword>
<keyword id="KW-1133">Transmembrane helix</keyword>
<accession>Q29IL2</accession>